<evidence type="ECO:0000255" key="1">
    <source>
        <dbReference type="HAMAP-Rule" id="MF_00453"/>
    </source>
</evidence>
<protein>
    <recommendedName>
        <fullName evidence="1">Phosphoenolpyruvate carboxykinase (ATP)</fullName>
        <shortName evidence="1">PCK</shortName>
        <shortName evidence="1">PEP carboxykinase</shortName>
        <shortName evidence="1">PEPCK</shortName>
        <ecNumber evidence="1">4.1.1.49</ecNumber>
    </recommendedName>
</protein>
<feature type="chain" id="PRO_1000026337" description="Phosphoenolpyruvate carboxykinase (ATP)">
    <location>
        <begin position="1"/>
        <end position="513"/>
    </location>
</feature>
<feature type="binding site" evidence="1">
    <location>
        <position position="45"/>
    </location>
    <ligand>
        <name>substrate</name>
    </ligand>
</feature>
<feature type="binding site" evidence="1">
    <location>
        <position position="179"/>
    </location>
    <ligand>
        <name>substrate</name>
    </ligand>
</feature>
<feature type="binding site" evidence="1">
    <location>
        <position position="185"/>
    </location>
    <ligand>
        <name>ATP</name>
        <dbReference type="ChEBI" id="CHEBI:30616"/>
    </ligand>
</feature>
<feature type="binding site" evidence="1">
    <location>
        <position position="185"/>
    </location>
    <ligand>
        <name>Mn(2+)</name>
        <dbReference type="ChEBI" id="CHEBI:29035"/>
    </ligand>
</feature>
<feature type="binding site" evidence="1">
    <location>
        <position position="185"/>
    </location>
    <ligand>
        <name>substrate</name>
    </ligand>
</feature>
<feature type="binding site" evidence="1">
    <location>
        <position position="204"/>
    </location>
    <ligand>
        <name>ATP</name>
        <dbReference type="ChEBI" id="CHEBI:30616"/>
    </ligand>
</feature>
<feature type="binding site" evidence="1">
    <location>
        <position position="204"/>
    </location>
    <ligand>
        <name>Mn(2+)</name>
        <dbReference type="ChEBI" id="CHEBI:29035"/>
    </ligand>
</feature>
<feature type="binding site" evidence="1">
    <location>
        <begin position="220"/>
        <end position="228"/>
    </location>
    <ligand>
        <name>ATP</name>
        <dbReference type="ChEBI" id="CHEBI:30616"/>
    </ligand>
</feature>
<feature type="binding site" evidence="1">
    <location>
        <position position="241"/>
    </location>
    <ligand>
        <name>Mn(2+)</name>
        <dbReference type="ChEBI" id="CHEBI:29035"/>
    </ligand>
</feature>
<feature type="binding site" evidence="1">
    <location>
        <position position="269"/>
    </location>
    <ligand>
        <name>ATP</name>
        <dbReference type="ChEBI" id="CHEBI:30616"/>
    </ligand>
</feature>
<feature type="binding site" evidence="1">
    <location>
        <position position="305"/>
    </location>
    <ligand>
        <name>ATP</name>
        <dbReference type="ChEBI" id="CHEBI:30616"/>
    </ligand>
</feature>
<feature type="binding site" evidence="1">
    <location>
        <position position="305"/>
    </location>
    <ligand>
        <name>substrate</name>
    </ligand>
</feature>
<feature type="binding site" evidence="1">
    <location>
        <position position="431"/>
    </location>
    <ligand>
        <name>ATP</name>
        <dbReference type="ChEBI" id="CHEBI:30616"/>
    </ligand>
</feature>
<keyword id="KW-0067">ATP-binding</keyword>
<keyword id="KW-0963">Cytoplasm</keyword>
<keyword id="KW-0210">Decarboxylase</keyword>
<keyword id="KW-0312">Gluconeogenesis</keyword>
<keyword id="KW-0456">Lyase</keyword>
<keyword id="KW-0464">Manganese</keyword>
<keyword id="KW-0479">Metal-binding</keyword>
<keyword id="KW-0547">Nucleotide-binding</keyword>
<accession>A6VDW7</accession>
<organism>
    <name type="scientific">Pseudomonas paraeruginosa (strain DSM 24068 / PA7)</name>
    <name type="common">Pseudomonas aeruginosa (strain PA7)</name>
    <dbReference type="NCBI Taxonomy" id="381754"/>
    <lineage>
        <taxon>Bacteria</taxon>
        <taxon>Pseudomonadati</taxon>
        <taxon>Pseudomonadota</taxon>
        <taxon>Gammaproteobacteria</taxon>
        <taxon>Pseudomonadales</taxon>
        <taxon>Pseudomonadaceae</taxon>
        <taxon>Pseudomonas</taxon>
        <taxon>Pseudomonas paraeruginosa</taxon>
    </lineage>
</organism>
<gene>
    <name evidence="1" type="primary">pckA</name>
    <name type="ordered locus">PSPA7_5935</name>
</gene>
<name>PCKA_PSEP7</name>
<dbReference type="EC" id="4.1.1.49" evidence="1"/>
<dbReference type="EMBL" id="CP000744">
    <property type="protein sequence ID" value="ABR83128.1"/>
    <property type="molecule type" value="Genomic_DNA"/>
</dbReference>
<dbReference type="RefSeq" id="WP_012077824.1">
    <property type="nucleotide sequence ID" value="NC_009656.1"/>
</dbReference>
<dbReference type="SMR" id="A6VDW7"/>
<dbReference type="KEGG" id="pap:PSPA7_5935"/>
<dbReference type="HOGENOM" id="CLU_018247_0_1_6"/>
<dbReference type="UniPathway" id="UPA00138"/>
<dbReference type="Proteomes" id="UP000001582">
    <property type="component" value="Chromosome"/>
</dbReference>
<dbReference type="GO" id="GO:0005829">
    <property type="term" value="C:cytosol"/>
    <property type="evidence" value="ECO:0007669"/>
    <property type="project" value="TreeGrafter"/>
</dbReference>
<dbReference type="GO" id="GO:0005524">
    <property type="term" value="F:ATP binding"/>
    <property type="evidence" value="ECO:0007669"/>
    <property type="project" value="UniProtKB-UniRule"/>
</dbReference>
<dbReference type="GO" id="GO:0046872">
    <property type="term" value="F:metal ion binding"/>
    <property type="evidence" value="ECO:0007669"/>
    <property type="project" value="UniProtKB-KW"/>
</dbReference>
<dbReference type="GO" id="GO:0004612">
    <property type="term" value="F:phosphoenolpyruvate carboxykinase (ATP) activity"/>
    <property type="evidence" value="ECO:0007669"/>
    <property type="project" value="UniProtKB-UniRule"/>
</dbReference>
<dbReference type="GO" id="GO:0006094">
    <property type="term" value="P:gluconeogenesis"/>
    <property type="evidence" value="ECO:0007669"/>
    <property type="project" value="UniProtKB-UniRule"/>
</dbReference>
<dbReference type="CDD" id="cd00484">
    <property type="entry name" value="PEPCK_ATP"/>
    <property type="match status" value="1"/>
</dbReference>
<dbReference type="Gene3D" id="3.90.228.20">
    <property type="match status" value="1"/>
</dbReference>
<dbReference type="Gene3D" id="3.40.449.10">
    <property type="entry name" value="Phosphoenolpyruvate Carboxykinase, domain 1"/>
    <property type="match status" value="1"/>
</dbReference>
<dbReference type="Gene3D" id="2.170.8.10">
    <property type="entry name" value="Phosphoenolpyruvate Carboxykinase, domain 2"/>
    <property type="match status" value="1"/>
</dbReference>
<dbReference type="HAMAP" id="MF_00453">
    <property type="entry name" value="PEPCK_ATP"/>
    <property type="match status" value="1"/>
</dbReference>
<dbReference type="InterPro" id="IPR001272">
    <property type="entry name" value="PEP_carboxykinase_ATP"/>
</dbReference>
<dbReference type="InterPro" id="IPR013035">
    <property type="entry name" value="PEP_carboxykinase_C"/>
</dbReference>
<dbReference type="InterPro" id="IPR008210">
    <property type="entry name" value="PEP_carboxykinase_N"/>
</dbReference>
<dbReference type="InterPro" id="IPR015994">
    <property type="entry name" value="PEPCK_ATP_CS"/>
</dbReference>
<dbReference type="NCBIfam" id="TIGR00224">
    <property type="entry name" value="pckA"/>
    <property type="match status" value="1"/>
</dbReference>
<dbReference type="NCBIfam" id="NF006820">
    <property type="entry name" value="PRK09344.1-2"/>
    <property type="match status" value="1"/>
</dbReference>
<dbReference type="NCBIfam" id="NF006821">
    <property type="entry name" value="PRK09344.1-3"/>
    <property type="match status" value="1"/>
</dbReference>
<dbReference type="NCBIfam" id="NF006823">
    <property type="entry name" value="PRK09344.1-5"/>
    <property type="match status" value="1"/>
</dbReference>
<dbReference type="PANTHER" id="PTHR30031:SF0">
    <property type="entry name" value="PHOSPHOENOLPYRUVATE CARBOXYKINASE (ATP)"/>
    <property type="match status" value="1"/>
</dbReference>
<dbReference type="PANTHER" id="PTHR30031">
    <property type="entry name" value="PHOSPHOENOLPYRUVATE CARBOXYKINASE ATP"/>
    <property type="match status" value="1"/>
</dbReference>
<dbReference type="Pfam" id="PF01293">
    <property type="entry name" value="PEPCK_ATP"/>
    <property type="match status" value="1"/>
</dbReference>
<dbReference type="PIRSF" id="PIRSF006294">
    <property type="entry name" value="PEP_crbxkin"/>
    <property type="match status" value="1"/>
</dbReference>
<dbReference type="SUPFAM" id="SSF68923">
    <property type="entry name" value="PEP carboxykinase N-terminal domain"/>
    <property type="match status" value="1"/>
</dbReference>
<dbReference type="SUPFAM" id="SSF53795">
    <property type="entry name" value="PEP carboxykinase-like"/>
    <property type="match status" value="1"/>
</dbReference>
<dbReference type="PROSITE" id="PS00532">
    <property type="entry name" value="PEPCK_ATP"/>
    <property type="match status" value="1"/>
</dbReference>
<reference key="1">
    <citation type="submission" date="2007-06" db="EMBL/GenBank/DDBJ databases">
        <authorList>
            <person name="Dodson R.J."/>
            <person name="Harkins D."/>
            <person name="Paulsen I.T."/>
        </authorList>
    </citation>
    <scope>NUCLEOTIDE SEQUENCE [LARGE SCALE GENOMIC DNA]</scope>
    <source>
        <strain>DSM 24068 / PA7</strain>
    </source>
</reference>
<comment type="function">
    <text evidence="1">Involved in the gluconeogenesis. Catalyzes the conversion of oxaloacetate (OAA) to phosphoenolpyruvate (PEP) through direct phosphoryl transfer between the nucleoside triphosphate and OAA.</text>
</comment>
<comment type="catalytic activity">
    <reaction evidence="1">
        <text>oxaloacetate + ATP = phosphoenolpyruvate + ADP + CO2</text>
        <dbReference type="Rhea" id="RHEA:18617"/>
        <dbReference type="ChEBI" id="CHEBI:16452"/>
        <dbReference type="ChEBI" id="CHEBI:16526"/>
        <dbReference type="ChEBI" id="CHEBI:30616"/>
        <dbReference type="ChEBI" id="CHEBI:58702"/>
        <dbReference type="ChEBI" id="CHEBI:456216"/>
        <dbReference type="EC" id="4.1.1.49"/>
    </reaction>
</comment>
<comment type="cofactor">
    <cofactor evidence="1">
        <name>Mn(2+)</name>
        <dbReference type="ChEBI" id="CHEBI:29035"/>
    </cofactor>
    <text evidence="1">Binds 1 Mn(2+) ion per subunit.</text>
</comment>
<comment type="pathway">
    <text evidence="1">Carbohydrate biosynthesis; gluconeogenesis.</text>
</comment>
<comment type="subunit">
    <text evidence="1">Monomer.</text>
</comment>
<comment type="subcellular location">
    <subcellularLocation>
        <location evidence="1">Cytoplasm</location>
    </subcellularLocation>
</comment>
<comment type="similarity">
    <text evidence="1">Belongs to the phosphoenolpyruvate carboxykinase (ATP) family.</text>
</comment>
<proteinExistence type="inferred from homology"/>
<sequence length="513" mass="55775">MTQANNAVYTDISAAQLVEEAIRRGEGELAANGSLVVRTGHRTGRSPVDRFIVEEPSTKDAIAWGNINRPFPADKFDALWARVEAFNNAQDHFVSHVHVGAAEAYYLPVKMTTATAWQNLFGRCLFIEPEQYNPAGKDEWQVLNVANFECVPERDGTNSDGCVILNFAQKKVLIAGMRYAGEMKKAMFSVQNFLLPERDVLPMHCAANIGEAGDVTLFFGLSGTGKTTLSADESRYLIGDDEHGWGEGVVFNVEGGCYAKCIDLSEKNEPVIWKAIKFGAVLENVVLDEERVPDYADDSLTQNSRAAYPLEHVEKRSEKNLGGEPNAVIFLTCDLTGVLPPVSILNNEQAAYHFLSGYTALVGSTEMGSGGGIKSTFSTCFGAPFFPRPAGVYAELLIKRIKAFGSKVYLVNTGWTGGGYGVGKRFNIPTTRGVIAAIQSGALVDAETEHLDIINLDVPKAVPGVETNLLNPRNTWADKAAYDEAAKGLARQFIENFKKFEVSDAIKAAGPQL</sequence>